<sequence>MKRTFQPNQRKRKKDHGFRARMSTKNGRKVLKRRRVRGRAKLSA</sequence>
<feature type="chain" id="PRO_0000187385" description="Large ribosomal subunit protein bL34">
    <location>
        <begin position="1"/>
        <end position="44"/>
    </location>
</feature>
<feature type="region of interest" description="Disordered" evidence="1">
    <location>
        <begin position="1"/>
        <end position="44"/>
    </location>
</feature>
<feature type="compositionally biased region" description="Basic residues" evidence="1">
    <location>
        <begin position="1"/>
        <end position="16"/>
    </location>
</feature>
<feature type="compositionally biased region" description="Basic residues" evidence="1">
    <location>
        <begin position="26"/>
        <end position="44"/>
    </location>
</feature>
<proteinExistence type="inferred from homology"/>
<evidence type="ECO:0000256" key="1">
    <source>
        <dbReference type="SAM" id="MobiDB-lite"/>
    </source>
</evidence>
<evidence type="ECO:0000305" key="2"/>
<comment type="similarity">
    <text evidence="2">Belongs to the bacterial ribosomal protein bL34 family.</text>
</comment>
<name>RL34_FUSNN</name>
<organism>
    <name type="scientific">Fusobacterium nucleatum subsp. nucleatum (strain ATCC 25586 / DSM 15643 / BCRC 10681 / CIP 101130 / JCM 8532 / KCTC 2640 / LMG 13131 / VPI 4355)</name>
    <dbReference type="NCBI Taxonomy" id="190304"/>
    <lineage>
        <taxon>Bacteria</taxon>
        <taxon>Fusobacteriati</taxon>
        <taxon>Fusobacteriota</taxon>
        <taxon>Fusobacteriia</taxon>
        <taxon>Fusobacteriales</taxon>
        <taxon>Fusobacteriaceae</taxon>
        <taxon>Fusobacterium</taxon>
    </lineage>
</organism>
<protein>
    <recommendedName>
        <fullName evidence="2">Large ribosomal subunit protein bL34</fullName>
    </recommendedName>
    <alternativeName>
        <fullName>50S ribosomal protein L34</fullName>
    </alternativeName>
</protein>
<reference key="1">
    <citation type="journal article" date="2002" name="J. Bacteriol.">
        <title>Genome sequence and analysis of the oral bacterium Fusobacterium nucleatum strain ATCC 25586.</title>
        <authorList>
            <person name="Kapatral V."/>
            <person name="Anderson I."/>
            <person name="Ivanova N."/>
            <person name="Reznik G."/>
            <person name="Los T."/>
            <person name="Lykidis A."/>
            <person name="Bhattacharyya A."/>
            <person name="Bartman A."/>
            <person name="Gardner W."/>
            <person name="Grechkin G."/>
            <person name="Zhu L."/>
            <person name="Vasieva O."/>
            <person name="Chu L."/>
            <person name="Kogan Y."/>
            <person name="Chaga O."/>
            <person name="Goltsman E."/>
            <person name="Bernal A."/>
            <person name="Larsen N."/>
            <person name="D'Souza M."/>
            <person name="Walunas T."/>
            <person name="Pusch G."/>
            <person name="Haselkorn R."/>
            <person name="Fonstein M."/>
            <person name="Kyrpides N.C."/>
            <person name="Overbeek R."/>
        </authorList>
    </citation>
    <scope>NUCLEOTIDE SEQUENCE [LARGE SCALE GENOMIC DNA]</scope>
    <source>
        <strain>ATCC 25586 / DSM 15643 / BCRC 10681 / CIP 101130 / JCM 8532 / KCTC 2640 / LMG 13131 / VPI 4355</strain>
    </source>
</reference>
<reference key="2">
    <citation type="journal article" date="2005" name="Bioinformatics">
        <title>Improving genome annotations using phylogenetic profile anomaly detection.</title>
        <authorList>
            <person name="Mikkelsen T.S."/>
            <person name="Galagan J.E."/>
            <person name="Mesirov J.P."/>
        </authorList>
    </citation>
    <scope>IDENTIFICATION</scope>
</reference>
<accession>P68997</accession>
<keyword id="KW-1185">Reference proteome</keyword>
<keyword id="KW-0687">Ribonucleoprotein</keyword>
<keyword id="KW-0689">Ribosomal protein</keyword>
<gene>
    <name type="primary">rpmH</name>
    <name type="ordered locus">FN0001.1</name>
</gene>
<dbReference type="EMBL" id="AE009951">
    <property type="status" value="NOT_ANNOTATED_CDS"/>
    <property type="molecule type" value="Genomic_DNA"/>
</dbReference>
<dbReference type="RefSeq" id="WP_005895154.1">
    <property type="nucleotide sequence ID" value="NZ_OZ209243.1"/>
</dbReference>
<dbReference type="SMR" id="P68997"/>
<dbReference type="FunCoup" id="P68997">
    <property type="interactions" value="207"/>
</dbReference>
<dbReference type="GeneID" id="93327544"/>
<dbReference type="InParanoid" id="P68997"/>
<dbReference type="Proteomes" id="UP000002521">
    <property type="component" value="Chromosome"/>
</dbReference>
<dbReference type="GO" id="GO:1990904">
    <property type="term" value="C:ribonucleoprotein complex"/>
    <property type="evidence" value="ECO:0007669"/>
    <property type="project" value="UniProtKB-KW"/>
</dbReference>
<dbReference type="GO" id="GO:0005840">
    <property type="term" value="C:ribosome"/>
    <property type="evidence" value="ECO:0007669"/>
    <property type="project" value="UniProtKB-KW"/>
</dbReference>
<dbReference type="GO" id="GO:0003735">
    <property type="term" value="F:structural constituent of ribosome"/>
    <property type="evidence" value="ECO:0007669"/>
    <property type="project" value="InterPro"/>
</dbReference>
<dbReference type="GO" id="GO:0006412">
    <property type="term" value="P:translation"/>
    <property type="evidence" value="ECO:0007669"/>
    <property type="project" value="UniProtKB-UniRule"/>
</dbReference>
<dbReference type="FunFam" id="1.10.287.3980:FF:000001">
    <property type="entry name" value="Mitochondrial ribosomal protein L34"/>
    <property type="match status" value="1"/>
</dbReference>
<dbReference type="Gene3D" id="1.10.287.3980">
    <property type="match status" value="1"/>
</dbReference>
<dbReference type="HAMAP" id="MF_00391">
    <property type="entry name" value="Ribosomal_bL34"/>
    <property type="match status" value="1"/>
</dbReference>
<dbReference type="InterPro" id="IPR000271">
    <property type="entry name" value="Ribosomal_bL34"/>
</dbReference>
<dbReference type="InterPro" id="IPR020939">
    <property type="entry name" value="Ribosomal_bL34_CS"/>
</dbReference>
<dbReference type="NCBIfam" id="TIGR01030">
    <property type="entry name" value="rpmH_bact"/>
    <property type="match status" value="1"/>
</dbReference>
<dbReference type="PANTHER" id="PTHR14503:SF4">
    <property type="entry name" value="LARGE RIBOSOMAL SUBUNIT PROTEIN BL34M"/>
    <property type="match status" value="1"/>
</dbReference>
<dbReference type="PANTHER" id="PTHR14503">
    <property type="entry name" value="MITOCHONDRIAL RIBOSOMAL PROTEIN 34 FAMILY MEMBER"/>
    <property type="match status" value="1"/>
</dbReference>
<dbReference type="Pfam" id="PF00468">
    <property type="entry name" value="Ribosomal_L34"/>
    <property type="match status" value="1"/>
</dbReference>
<dbReference type="PROSITE" id="PS00784">
    <property type="entry name" value="RIBOSOMAL_L34"/>
    <property type="match status" value="1"/>
</dbReference>